<feature type="chain" id="PRO_0000230900" description="Transcriptional repressor NrdR">
    <location>
        <begin position="1"/>
        <end position="159"/>
    </location>
</feature>
<feature type="domain" description="ATP-cone" evidence="1">
    <location>
        <begin position="49"/>
        <end position="139"/>
    </location>
</feature>
<feature type="zinc finger region" evidence="1">
    <location>
        <begin position="3"/>
        <end position="34"/>
    </location>
</feature>
<feature type="region of interest" description="Disordered" evidence="2">
    <location>
        <begin position="1"/>
        <end position="21"/>
    </location>
</feature>
<reference key="1">
    <citation type="journal article" date="2004" name="Nat. Biotechnol.">
        <title>Complete sequence and comparative genome analysis of the dairy bacterium Streptococcus thermophilus.</title>
        <authorList>
            <person name="Bolotin A."/>
            <person name="Quinquis B."/>
            <person name="Renault P."/>
            <person name="Sorokin A."/>
            <person name="Ehrlich S.D."/>
            <person name="Kulakauskas S."/>
            <person name="Lapidus A."/>
            <person name="Goltsman E."/>
            <person name="Mazur M."/>
            <person name="Pusch G.D."/>
            <person name="Fonstein M."/>
            <person name="Overbeek R."/>
            <person name="Kyprides N."/>
            <person name="Purnelle B."/>
            <person name="Prozzi D."/>
            <person name="Ngui K."/>
            <person name="Masuy D."/>
            <person name="Hancy F."/>
            <person name="Burteau S."/>
            <person name="Boutry M."/>
            <person name="Delcour J."/>
            <person name="Goffeau A."/>
            <person name="Hols P."/>
        </authorList>
    </citation>
    <scope>NUCLEOTIDE SEQUENCE [LARGE SCALE GENOMIC DNA]</scope>
    <source>
        <strain>ATCC BAA-250 / LMG 18311</strain>
    </source>
</reference>
<gene>
    <name evidence="1" type="primary">nrdR</name>
    <name type="ordered locus">stu0319</name>
</gene>
<name>NRDR_STRT2</name>
<proteinExistence type="inferred from homology"/>
<accession>Q5M5X8</accession>
<dbReference type="EMBL" id="CP000023">
    <property type="protein sequence ID" value="AAV60041.1"/>
    <property type="status" value="ALT_INIT"/>
    <property type="molecule type" value="Genomic_DNA"/>
</dbReference>
<dbReference type="RefSeq" id="WP_002949642.1">
    <property type="nucleotide sequence ID" value="NC_006448.1"/>
</dbReference>
<dbReference type="SMR" id="Q5M5X8"/>
<dbReference type="STRING" id="264199.stu0319"/>
<dbReference type="GeneID" id="66898239"/>
<dbReference type="KEGG" id="stl:stu0319"/>
<dbReference type="eggNOG" id="COG1327">
    <property type="taxonomic scope" value="Bacteria"/>
</dbReference>
<dbReference type="HOGENOM" id="CLU_108412_0_0_9"/>
<dbReference type="Proteomes" id="UP000001170">
    <property type="component" value="Chromosome"/>
</dbReference>
<dbReference type="GO" id="GO:0005524">
    <property type="term" value="F:ATP binding"/>
    <property type="evidence" value="ECO:0007669"/>
    <property type="project" value="UniProtKB-KW"/>
</dbReference>
<dbReference type="GO" id="GO:0003677">
    <property type="term" value="F:DNA binding"/>
    <property type="evidence" value="ECO:0007669"/>
    <property type="project" value="UniProtKB-KW"/>
</dbReference>
<dbReference type="GO" id="GO:0008270">
    <property type="term" value="F:zinc ion binding"/>
    <property type="evidence" value="ECO:0007669"/>
    <property type="project" value="UniProtKB-UniRule"/>
</dbReference>
<dbReference type="GO" id="GO:0045892">
    <property type="term" value="P:negative regulation of DNA-templated transcription"/>
    <property type="evidence" value="ECO:0007669"/>
    <property type="project" value="UniProtKB-UniRule"/>
</dbReference>
<dbReference type="HAMAP" id="MF_00440">
    <property type="entry name" value="NrdR"/>
    <property type="match status" value="1"/>
</dbReference>
<dbReference type="InterPro" id="IPR005144">
    <property type="entry name" value="ATP-cone_dom"/>
</dbReference>
<dbReference type="InterPro" id="IPR055173">
    <property type="entry name" value="NrdR-like_N"/>
</dbReference>
<dbReference type="InterPro" id="IPR003796">
    <property type="entry name" value="RNR_NrdR-like"/>
</dbReference>
<dbReference type="NCBIfam" id="TIGR00244">
    <property type="entry name" value="transcriptional regulator NrdR"/>
    <property type="match status" value="1"/>
</dbReference>
<dbReference type="PANTHER" id="PTHR30455">
    <property type="entry name" value="TRANSCRIPTIONAL REPRESSOR NRDR"/>
    <property type="match status" value="1"/>
</dbReference>
<dbReference type="PANTHER" id="PTHR30455:SF2">
    <property type="entry name" value="TRANSCRIPTIONAL REPRESSOR NRDR"/>
    <property type="match status" value="1"/>
</dbReference>
<dbReference type="Pfam" id="PF03477">
    <property type="entry name" value="ATP-cone"/>
    <property type="match status" value="1"/>
</dbReference>
<dbReference type="Pfam" id="PF22811">
    <property type="entry name" value="Zn_ribbon_NrdR"/>
    <property type="match status" value="1"/>
</dbReference>
<dbReference type="PROSITE" id="PS51161">
    <property type="entry name" value="ATP_CONE"/>
    <property type="match status" value="1"/>
</dbReference>
<keyword id="KW-0067">ATP-binding</keyword>
<keyword id="KW-0238">DNA-binding</keyword>
<keyword id="KW-0479">Metal-binding</keyword>
<keyword id="KW-0547">Nucleotide-binding</keyword>
<keyword id="KW-1185">Reference proteome</keyword>
<keyword id="KW-0678">Repressor</keyword>
<keyword id="KW-0804">Transcription</keyword>
<keyword id="KW-0805">Transcription regulation</keyword>
<keyword id="KW-0862">Zinc</keyword>
<keyword id="KW-0863">Zinc-finger</keyword>
<evidence type="ECO:0000255" key="1">
    <source>
        <dbReference type="HAMAP-Rule" id="MF_00440"/>
    </source>
</evidence>
<evidence type="ECO:0000256" key="2">
    <source>
        <dbReference type="SAM" id="MobiDB-lite"/>
    </source>
</evidence>
<evidence type="ECO:0000305" key="3"/>
<comment type="function">
    <text evidence="1">Negatively regulates transcription of bacterial ribonucleotide reductase nrd genes and operons by binding to NrdR-boxes.</text>
</comment>
<comment type="cofactor">
    <cofactor evidence="1">
        <name>Zn(2+)</name>
        <dbReference type="ChEBI" id="CHEBI:29105"/>
    </cofactor>
    <text evidence="1">Binds 1 zinc ion.</text>
</comment>
<comment type="similarity">
    <text evidence="1">Belongs to the NrdR family.</text>
</comment>
<comment type="sequence caution" evidence="3">
    <conflict type="erroneous initiation">
        <sequence resource="EMBL-CDS" id="AAV60041"/>
    </conflict>
</comment>
<organism>
    <name type="scientific">Streptococcus thermophilus (strain ATCC BAA-250 / LMG 18311)</name>
    <dbReference type="NCBI Taxonomy" id="264199"/>
    <lineage>
        <taxon>Bacteria</taxon>
        <taxon>Bacillati</taxon>
        <taxon>Bacillota</taxon>
        <taxon>Bacilli</taxon>
        <taxon>Lactobacillales</taxon>
        <taxon>Streptococcaceae</taxon>
        <taxon>Streptococcus</taxon>
    </lineage>
</organism>
<protein>
    <recommendedName>
        <fullName evidence="1">Transcriptional repressor NrdR</fullName>
    </recommendedName>
</protein>
<sequence length="159" mass="18530">MRCPKCQHNKSNVIDSRQAEDGNTIRRRRECDACHARFTTFERVEEVPLLVVKKDGTREQFSRDKIFNGILMSAQKRPVSSEDIENAITRIEQNIRRNHDGEVDSEVIGNLVMKELADLDEITYVRFASVYRSFKDVDEIEELLQEITKTVRAKKESKK</sequence>